<organism>
    <name type="scientific">Desulfitobacterium hafniense (strain Y51)</name>
    <dbReference type="NCBI Taxonomy" id="138119"/>
    <lineage>
        <taxon>Bacteria</taxon>
        <taxon>Bacillati</taxon>
        <taxon>Bacillota</taxon>
        <taxon>Clostridia</taxon>
        <taxon>Eubacteriales</taxon>
        <taxon>Desulfitobacteriaceae</taxon>
        <taxon>Desulfitobacterium</taxon>
    </lineage>
</organism>
<feature type="chain" id="PRO_1000011616" description="GTPase Der">
    <location>
        <begin position="1"/>
        <end position="441"/>
    </location>
</feature>
<feature type="domain" description="EngA-type G 1">
    <location>
        <begin position="4"/>
        <end position="168"/>
    </location>
</feature>
<feature type="domain" description="EngA-type G 2">
    <location>
        <begin position="177"/>
        <end position="352"/>
    </location>
</feature>
<feature type="domain" description="KH-like" evidence="1">
    <location>
        <begin position="353"/>
        <end position="437"/>
    </location>
</feature>
<feature type="binding site" evidence="1">
    <location>
        <begin position="10"/>
        <end position="17"/>
    </location>
    <ligand>
        <name>GTP</name>
        <dbReference type="ChEBI" id="CHEBI:37565"/>
        <label>1</label>
    </ligand>
</feature>
<feature type="binding site" evidence="1">
    <location>
        <begin position="57"/>
        <end position="61"/>
    </location>
    <ligand>
        <name>GTP</name>
        <dbReference type="ChEBI" id="CHEBI:37565"/>
        <label>1</label>
    </ligand>
</feature>
<feature type="binding site" evidence="1">
    <location>
        <begin position="121"/>
        <end position="124"/>
    </location>
    <ligand>
        <name>GTP</name>
        <dbReference type="ChEBI" id="CHEBI:37565"/>
        <label>1</label>
    </ligand>
</feature>
<feature type="binding site" evidence="1">
    <location>
        <begin position="183"/>
        <end position="190"/>
    </location>
    <ligand>
        <name>GTP</name>
        <dbReference type="ChEBI" id="CHEBI:37565"/>
        <label>2</label>
    </ligand>
</feature>
<feature type="binding site" evidence="1">
    <location>
        <begin position="230"/>
        <end position="234"/>
    </location>
    <ligand>
        <name>GTP</name>
        <dbReference type="ChEBI" id="CHEBI:37565"/>
        <label>2</label>
    </ligand>
</feature>
<feature type="binding site" evidence="1">
    <location>
        <begin position="295"/>
        <end position="298"/>
    </location>
    <ligand>
        <name>GTP</name>
        <dbReference type="ChEBI" id="CHEBI:37565"/>
        <label>2</label>
    </ligand>
</feature>
<sequence length="441" mass="49564">MSKPVVAIVGRPNVGKSTLFNRLAGGLVAIVENRPGVTRDRLYRDSEWLGRKFTIIDTGGIEFVNENTPITAQMRRQAEIAIEEADVIVFVIDAQISPTPDDDMIAQTLRRSGKPVILAANKVENFAKTELYEFYNLGLGEPVPISAVHGMNIGDLLDEVVSHFPEDIEEEVDPDTIRIAVVGRPNVGKSSLVNTLLGEERVIVSNIPGTTRDAIDSAFEHEGKHYIIIDTAGMRRKGRIEELTEQYSVSRSLRAVDRSDVILMLLDAGEGVTEQDKKIAGYAHEAGKGIVLVVNKWDLIEKDDKTMNRFEKDIREELGFMQYAPTLFISAKTGQRVTKLLDLVDFVAEQNSTRVATATLNTLVREWVHLNPPPTDKGRRLKVLYATQVGVKPPTFVFFVNDHELMHFSYRRYLENQLRSSFGFEGSPIRMIVRQKDEERE</sequence>
<evidence type="ECO:0000255" key="1">
    <source>
        <dbReference type="HAMAP-Rule" id="MF_00195"/>
    </source>
</evidence>
<proteinExistence type="inferred from homology"/>
<protein>
    <recommendedName>
        <fullName evidence="1">GTPase Der</fullName>
    </recommendedName>
    <alternativeName>
        <fullName evidence="1">GTP-binding protein EngA</fullName>
    </alternativeName>
</protein>
<keyword id="KW-0342">GTP-binding</keyword>
<keyword id="KW-0547">Nucleotide-binding</keyword>
<keyword id="KW-1185">Reference proteome</keyword>
<keyword id="KW-0677">Repeat</keyword>
<keyword id="KW-0690">Ribosome biogenesis</keyword>
<reference key="1">
    <citation type="journal article" date="2006" name="J. Bacteriol.">
        <title>Complete genome sequence of the dehalorespiring bacterium Desulfitobacterium hafniense Y51 and comparison with Dehalococcoides ethenogenes 195.</title>
        <authorList>
            <person name="Nonaka H."/>
            <person name="Keresztes G."/>
            <person name="Shinoda Y."/>
            <person name="Ikenaga Y."/>
            <person name="Abe M."/>
            <person name="Naito K."/>
            <person name="Inatomi K."/>
            <person name="Furukawa K."/>
            <person name="Inui M."/>
            <person name="Yukawa H."/>
        </authorList>
    </citation>
    <scope>NUCLEOTIDE SEQUENCE [LARGE SCALE GENOMIC DNA]</scope>
    <source>
        <strain>Y51</strain>
    </source>
</reference>
<accession>Q24VA2</accession>
<dbReference type="EMBL" id="AP008230">
    <property type="protein sequence ID" value="BAE84040.1"/>
    <property type="molecule type" value="Genomic_DNA"/>
</dbReference>
<dbReference type="RefSeq" id="WP_011460200.1">
    <property type="nucleotide sequence ID" value="NC_007907.1"/>
</dbReference>
<dbReference type="SMR" id="Q24VA2"/>
<dbReference type="STRING" id="138119.DSY2251"/>
<dbReference type="KEGG" id="dsy:DSY2251"/>
<dbReference type="eggNOG" id="COG1160">
    <property type="taxonomic scope" value="Bacteria"/>
</dbReference>
<dbReference type="HOGENOM" id="CLU_016077_6_2_9"/>
<dbReference type="Proteomes" id="UP000001946">
    <property type="component" value="Chromosome"/>
</dbReference>
<dbReference type="GO" id="GO:0016887">
    <property type="term" value="F:ATP hydrolysis activity"/>
    <property type="evidence" value="ECO:0007669"/>
    <property type="project" value="InterPro"/>
</dbReference>
<dbReference type="GO" id="GO:0005525">
    <property type="term" value="F:GTP binding"/>
    <property type="evidence" value="ECO:0007669"/>
    <property type="project" value="UniProtKB-UniRule"/>
</dbReference>
<dbReference type="GO" id="GO:0043022">
    <property type="term" value="F:ribosome binding"/>
    <property type="evidence" value="ECO:0007669"/>
    <property type="project" value="TreeGrafter"/>
</dbReference>
<dbReference type="GO" id="GO:0042254">
    <property type="term" value="P:ribosome biogenesis"/>
    <property type="evidence" value="ECO:0007669"/>
    <property type="project" value="UniProtKB-KW"/>
</dbReference>
<dbReference type="CDD" id="cd01894">
    <property type="entry name" value="EngA1"/>
    <property type="match status" value="1"/>
</dbReference>
<dbReference type="CDD" id="cd01895">
    <property type="entry name" value="EngA2"/>
    <property type="match status" value="1"/>
</dbReference>
<dbReference type="FunFam" id="3.30.300.20:FF:000004">
    <property type="entry name" value="GTPase Der"/>
    <property type="match status" value="1"/>
</dbReference>
<dbReference type="FunFam" id="3.40.50.300:FF:000040">
    <property type="entry name" value="GTPase Der"/>
    <property type="match status" value="1"/>
</dbReference>
<dbReference type="FunFam" id="3.40.50.300:FF:000057">
    <property type="entry name" value="GTPase Der"/>
    <property type="match status" value="1"/>
</dbReference>
<dbReference type="Gene3D" id="3.30.300.20">
    <property type="match status" value="1"/>
</dbReference>
<dbReference type="Gene3D" id="3.40.50.300">
    <property type="entry name" value="P-loop containing nucleotide triphosphate hydrolases"/>
    <property type="match status" value="2"/>
</dbReference>
<dbReference type="HAMAP" id="MF_00195">
    <property type="entry name" value="GTPase_Der"/>
    <property type="match status" value="1"/>
</dbReference>
<dbReference type="InterPro" id="IPR003593">
    <property type="entry name" value="AAA+_ATPase"/>
</dbReference>
<dbReference type="InterPro" id="IPR031166">
    <property type="entry name" value="G_ENGA"/>
</dbReference>
<dbReference type="InterPro" id="IPR006073">
    <property type="entry name" value="GTP-bd"/>
</dbReference>
<dbReference type="InterPro" id="IPR016484">
    <property type="entry name" value="GTPase_Der"/>
</dbReference>
<dbReference type="InterPro" id="IPR032859">
    <property type="entry name" value="KH_dom-like"/>
</dbReference>
<dbReference type="InterPro" id="IPR015946">
    <property type="entry name" value="KH_dom-like_a/b"/>
</dbReference>
<dbReference type="InterPro" id="IPR027417">
    <property type="entry name" value="P-loop_NTPase"/>
</dbReference>
<dbReference type="InterPro" id="IPR005225">
    <property type="entry name" value="Small_GTP-bd"/>
</dbReference>
<dbReference type="NCBIfam" id="TIGR03594">
    <property type="entry name" value="GTPase_EngA"/>
    <property type="match status" value="1"/>
</dbReference>
<dbReference type="NCBIfam" id="TIGR00231">
    <property type="entry name" value="small_GTP"/>
    <property type="match status" value="2"/>
</dbReference>
<dbReference type="PANTHER" id="PTHR43834">
    <property type="entry name" value="GTPASE DER"/>
    <property type="match status" value="1"/>
</dbReference>
<dbReference type="PANTHER" id="PTHR43834:SF6">
    <property type="entry name" value="GTPASE DER"/>
    <property type="match status" value="1"/>
</dbReference>
<dbReference type="Pfam" id="PF14714">
    <property type="entry name" value="KH_dom-like"/>
    <property type="match status" value="1"/>
</dbReference>
<dbReference type="Pfam" id="PF01926">
    <property type="entry name" value="MMR_HSR1"/>
    <property type="match status" value="2"/>
</dbReference>
<dbReference type="PIRSF" id="PIRSF006485">
    <property type="entry name" value="GTP-binding_EngA"/>
    <property type="match status" value="1"/>
</dbReference>
<dbReference type="PRINTS" id="PR00326">
    <property type="entry name" value="GTP1OBG"/>
</dbReference>
<dbReference type="SMART" id="SM00382">
    <property type="entry name" value="AAA"/>
    <property type="match status" value="2"/>
</dbReference>
<dbReference type="SUPFAM" id="SSF52540">
    <property type="entry name" value="P-loop containing nucleoside triphosphate hydrolases"/>
    <property type="match status" value="2"/>
</dbReference>
<dbReference type="PROSITE" id="PS51712">
    <property type="entry name" value="G_ENGA"/>
    <property type="match status" value="2"/>
</dbReference>
<name>DER_DESHY</name>
<comment type="function">
    <text evidence="1">GTPase that plays an essential role in the late steps of ribosome biogenesis.</text>
</comment>
<comment type="subunit">
    <text evidence="1">Associates with the 50S ribosomal subunit.</text>
</comment>
<comment type="similarity">
    <text evidence="1">Belongs to the TRAFAC class TrmE-Era-EngA-EngB-Septin-like GTPase superfamily. EngA (Der) GTPase family.</text>
</comment>
<gene>
    <name evidence="1" type="primary">der</name>
    <name type="synonym">engA</name>
    <name type="ordered locus">DSY2251</name>
</gene>